<dbReference type="EMBL" id="AK010694">
    <property type="protein sequence ID" value="BAB27126.1"/>
    <property type="molecule type" value="mRNA"/>
</dbReference>
<dbReference type="EMBL" id="AK011881">
    <property type="protein sequence ID" value="BAB27895.1"/>
    <property type="molecule type" value="mRNA"/>
</dbReference>
<dbReference type="EMBL" id="AK018614">
    <property type="protein sequence ID" value="BAB31308.1"/>
    <property type="molecule type" value="mRNA"/>
</dbReference>
<dbReference type="EMBL" id="AK079819">
    <property type="protein sequence ID" value="BAC37755.1"/>
    <property type="molecule type" value="mRNA"/>
</dbReference>
<dbReference type="EMBL" id="AK081301">
    <property type="protein sequence ID" value="BAC38188.1"/>
    <property type="molecule type" value="mRNA"/>
</dbReference>
<dbReference type="EMBL" id="AK085230">
    <property type="protein sequence ID" value="BAC39395.1"/>
    <property type="molecule type" value="mRNA"/>
</dbReference>
<dbReference type="EMBL" id="AK150938">
    <property type="protein sequence ID" value="BAE29973.1"/>
    <property type="molecule type" value="mRNA"/>
</dbReference>
<dbReference type="EMBL" id="AK160347">
    <property type="protein sequence ID" value="BAE35751.1"/>
    <property type="molecule type" value="mRNA"/>
</dbReference>
<dbReference type="EMBL" id="AK169392">
    <property type="protein sequence ID" value="BAE41139.1"/>
    <property type="molecule type" value="mRNA"/>
</dbReference>
<dbReference type="EMBL" id="BC058367">
    <property type="protein sequence ID" value="AAH58367.1"/>
    <property type="molecule type" value="mRNA"/>
</dbReference>
<dbReference type="EMBL" id="BC091760">
    <property type="protein sequence ID" value="AAH91760.1"/>
    <property type="molecule type" value="mRNA"/>
</dbReference>
<dbReference type="EMBL" id="BC096399">
    <property type="protein sequence ID" value="AAH96399.1"/>
    <property type="molecule type" value="mRNA"/>
</dbReference>
<dbReference type="CCDS" id="CCDS21406.1"/>
<dbReference type="RefSeq" id="NP_080273.1">
    <property type="nucleotide sequence ID" value="NM_025997.2"/>
</dbReference>
<dbReference type="SMR" id="Q9CQY2"/>
<dbReference type="BioGRID" id="211976">
    <property type="interactions" value="7"/>
</dbReference>
<dbReference type="FunCoup" id="Q9CQY2">
    <property type="interactions" value="1563"/>
</dbReference>
<dbReference type="STRING" id="10090.ENSMUSP00000039065"/>
<dbReference type="iPTMnet" id="Q9CQY2"/>
<dbReference type="PhosphoSitePlus" id="Q9CQY2"/>
<dbReference type="jPOST" id="Q9CQY2"/>
<dbReference type="PaxDb" id="10090-ENSMUSP00000039065"/>
<dbReference type="PeptideAtlas" id="Q9CQY2"/>
<dbReference type="ProteomicsDB" id="254979"/>
<dbReference type="Pumba" id="Q9CQY2"/>
<dbReference type="DNASU" id="67148"/>
<dbReference type="Ensembl" id="ENSMUST00000042166.11">
    <property type="protein sequence ID" value="ENSMUSP00000039065.5"/>
    <property type="gene ID" value="ENSMUSG00000038646.14"/>
</dbReference>
<dbReference type="Ensembl" id="ENSMUST00000118190.2">
    <property type="protein sequence ID" value="ENSMUSP00000113339.2"/>
    <property type="gene ID" value="ENSMUSG00000038646.14"/>
</dbReference>
<dbReference type="GeneID" id="67148"/>
<dbReference type="KEGG" id="mmu:67148"/>
<dbReference type="UCSC" id="uc009icl.1">
    <property type="organism name" value="mouse"/>
</dbReference>
<dbReference type="AGR" id="MGI:1914398"/>
<dbReference type="CTD" id="83640"/>
<dbReference type="MGI" id="MGI:1914398">
    <property type="gene designation" value="Ramac"/>
</dbReference>
<dbReference type="VEuPathDB" id="HostDB:ENSMUSG00000038646"/>
<dbReference type="eggNOG" id="ENOG502S60Q">
    <property type="taxonomic scope" value="Eukaryota"/>
</dbReference>
<dbReference type="GeneTree" id="ENSGT00390000011190"/>
<dbReference type="HOGENOM" id="CLU_144253_0_0_1"/>
<dbReference type="InParanoid" id="Q9CQY2"/>
<dbReference type="OMA" id="PPIIEEW"/>
<dbReference type="OrthoDB" id="5875297at2759"/>
<dbReference type="PhylomeDB" id="Q9CQY2"/>
<dbReference type="TreeFam" id="TF335880"/>
<dbReference type="BioGRID-ORCS" id="67148">
    <property type="hits" value="8 hits in 41 CRISPR screens"/>
</dbReference>
<dbReference type="ChiTaRS" id="Ramac">
    <property type="organism name" value="mouse"/>
</dbReference>
<dbReference type="PRO" id="PR:Q9CQY2"/>
<dbReference type="Proteomes" id="UP000000589">
    <property type="component" value="Chromosome 7"/>
</dbReference>
<dbReference type="RNAct" id="Q9CQY2">
    <property type="molecule type" value="protein"/>
</dbReference>
<dbReference type="Bgee" id="ENSMUSG00000038646">
    <property type="expression patterns" value="Expressed in animal zygote and 65 other cell types or tissues"/>
</dbReference>
<dbReference type="ExpressionAtlas" id="Q9CQY2">
    <property type="expression patterns" value="baseline and differential"/>
</dbReference>
<dbReference type="GO" id="GO:0160130">
    <property type="term" value="C:mRNA cap methyltransferase RNMT:RAMAC complex"/>
    <property type="evidence" value="ECO:0000250"/>
    <property type="project" value="UniProtKB"/>
</dbReference>
<dbReference type="GO" id="GO:0031533">
    <property type="term" value="C:mRNA capping enzyme complex"/>
    <property type="evidence" value="ECO:0000250"/>
    <property type="project" value="UniProtKB"/>
</dbReference>
<dbReference type="GO" id="GO:0005634">
    <property type="term" value="C:nucleus"/>
    <property type="evidence" value="ECO:0000250"/>
    <property type="project" value="UniProtKB"/>
</dbReference>
<dbReference type="GO" id="GO:0008047">
    <property type="term" value="F:enzyme activator activity"/>
    <property type="evidence" value="ECO:0000250"/>
    <property type="project" value="UniProtKB"/>
</dbReference>
<dbReference type="GO" id="GO:0003723">
    <property type="term" value="F:RNA binding"/>
    <property type="evidence" value="ECO:0000250"/>
    <property type="project" value="UniProtKB"/>
</dbReference>
<dbReference type="GO" id="GO:0006370">
    <property type="term" value="P:7-methylguanosine mRNA capping"/>
    <property type="evidence" value="ECO:0000250"/>
    <property type="project" value="UniProtKB"/>
</dbReference>
<dbReference type="GO" id="GO:0106005">
    <property type="term" value="P:RNA 5'-cap (guanine-N7)-methylation"/>
    <property type="evidence" value="ECO:0007669"/>
    <property type="project" value="InterPro"/>
</dbReference>
<dbReference type="InterPro" id="IPR028271">
    <property type="entry name" value="RAMAC"/>
</dbReference>
<dbReference type="PANTHER" id="PTHR48168">
    <property type="entry name" value="RNA GUANINE-7 METHYLTRANSFERASE-ACTIVATING SUBUNIT-LIKE (PSEUDOGENE)-RELATED"/>
    <property type="match status" value="1"/>
</dbReference>
<dbReference type="PANTHER" id="PTHR48168:SF1">
    <property type="entry name" value="RNA GUANINE-N7 METHYLTRANSFERASE ACTIVATING SUBUNIT-RELATED"/>
    <property type="match status" value="1"/>
</dbReference>
<dbReference type="Pfam" id="PF15320">
    <property type="entry name" value="RAM"/>
    <property type="match status" value="1"/>
</dbReference>
<name>RAMAC_MOUSE</name>
<feature type="chain" id="PRO_0000089984" description="RNA guanine-N7 methyltransferase activating subunit">
    <location>
        <begin position="1"/>
        <end position="119"/>
    </location>
</feature>
<feature type="region of interest" description="Interaction with RNMT" evidence="1">
    <location>
        <begin position="1"/>
        <end position="55"/>
    </location>
</feature>
<feature type="region of interest" description="Disordered" evidence="2">
    <location>
        <begin position="30"/>
        <end position="119"/>
    </location>
</feature>
<feature type="region of interest" description="RNA-binding" evidence="1">
    <location>
        <begin position="56"/>
        <end position="119"/>
    </location>
</feature>
<feature type="short sequence motif" description="RNMT-activating domain" evidence="1">
    <location>
        <begin position="36"/>
        <end position="42"/>
    </location>
</feature>
<feature type="compositionally biased region" description="Polar residues" evidence="2">
    <location>
        <begin position="47"/>
        <end position="61"/>
    </location>
</feature>
<feature type="compositionally biased region" description="Basic and acidic residues" evidence="2">
    <location>
        <begin position="62"/>
        <end position="73"/>
    </location>
</feature>
<feature type="compositionally biased region" description="Low complexity" evidence="2">
    <location>
        <begin position="89"/>
        <end position="112"/>
    </location>
</feature>
<feature type="modified residue" description="Phosphoserine" evidence="1">
    <location>
        <position position="36"/>
    </location>
</feature>
<feature type="modified residue" description="Omega-N-methylarginine" evidence="1">
    <location>
        <position position="85"/>
    </location>
</feature>
<feature type="modified residue" description="Phosphoserine" evidence="1">
    <location>
        <position position="86"/>
    </location>
</feature>
<feature type="sequence conflict" description="In Ref. 1; BAB27126." evidence="3" ref="1">
    <original>Q</original>
    <variation>E</variation>
    <location>
        <position position="95"/>
    </location>
</feature>
<sequence length="119" mass="14556">MSDTSEEIPNFEEMFASRFTKDDKEYQEYLKRPPESPPIVEEWNSRAGGNQRNRGNWLQDNRQFRGRDNRRGWPSDNRSNQWHGRSWGNNNYPQQRPEPYYQQQYTQYGHNQRPPYGYY</sequence>
<keyword id="KW-0488">Methylation</keyword>
<keyword id="KW-0506">mRNA capping</keyword>
<keyword id="KW-0507">mRNA processing</keyword>
<keyword id="KW-0539">Nucleus</keyword>
<keyword id="KW-0597">Phosphoprotein</keyword>
<keyword id="KW-1185">Reference proteome</keyword>
<keyword id="KW-0694">RNA-binding</keyword>
<proteinExistence type="inferred from homology"/>
<comment type="function">
    <text evidence="1">Regulatory subunit of the mRNA-capping methyltransferase RNMT:RAMAC complex that methylates the N7 position of the added guanosine to the 5'-cap structure of mRNAs. Promotes the recruitment of the methyl donor, S-adenosyl-L-methionine, to RNMT. Regulates RNMT expression by a post-transcriptional stabilizing mechanism. Binds RNA.</text>
</comment>
<comment type="subunit">
    <text evidence="1">Interacts with RNMT; this interaction enhances mRNA binding and cap methyltransferase activity.</text>
</comment>
<comment type="subcellular location">
    <subcellularLocation>
        <location evidence="1">Nucleus</location>
    </subcellularLocation>
</comment>
<comment type="similarity">
    <text evidence="3">Belongs to the RAM family.</text>
</comment>
<evidence type="ECO:0000250" key="1">
    <source>
        <dbReference type="UniProtKB" id="Q9BTL3"/>
    </source>
</evidence>
<evidence type="ECO:0000256" key="2">
    <source>
        <dbReference type="SAM" id="MobiDB-lite"/>
    </source>
</evidence>
<evidence type="ECO:0000305" key="3"/>
<evidence type="ECO:0000312" key="4">
    <source>
        <dbReference type="MGI" id="MGI:1914398"/>
    </source>
</evidence>
<accession>Q9CQY2</accession>
<accession>Q3TV69</accession>
<accession>Q9CWI1</accession>
<gene>
    <name type="primary">Ramac</name>
    <name type="synonym">Fam103a1</name>
    <name evidence="4" type="synonym">Rammet</name>
</gene>
<reference key="1">
    <citation type="journal article" date="2005" name="Science">
        <title>The transcriptional landscape of the mammalian genome.</title>
        <authorList>
            <person name="Carninci P."/>
            <person name="Kasukawa T."/>
            <person name="Katayama S."/>
            <person name="Gough J."/>
            <person name="Frith M.C."/>
            <person name="Maeda N."/>
            <person name="Oyama R."/>
            <person name="Ravasi T."/>
            <person name="Lenhard B."/>
            <person name="Wells C."/>
            <person name="Kodzius R."/>
            <person name="Shimokawa K."/>
            <person name="Bajic V.B."/>
            <person name="Brenner S.E."/>
            <person name="Batalov S."/>
            <person name="Forrest A.R."/>
            <person name="Zavolan M."/>
            <person name="Davis M.J."/>
            <person name="Wilming L.G."/>
            <person name="Aidinis V."/>
            <person name="Allen J.E."/>
            <person name="Ambesi-Impiombato A."/>
            <person name="Apweiler R."/>
            <person name="Aturaliya R.N."/>
            <person name="Bailey T.L."/>
            <person name="Bansal M."/>
            <person name="Baxter L."/>
            <person name="Beisel K.W."/>
            <person name="Bersano T."/>
            <person name="Bono H."/>
            <person name="Chalk A.M."/>
            <person name="Chiu K.P."/>
            <person name="Choudhary V."/>
            <person name="Christoffels A."/>
            <person name="Clutterbuck D.R."/>
            <person name="Crowe M.L."/>
            <person name="Dalla E."/>
            <person name="Dalrymple B.P."/>
            <person name="de Bono B."/>
            <person name="Della Gatta G."/>
            <person name="di Bernardo D."/>
            <person name="Down T."/>
            <person name="Engstrom P."/>
            <person name="Fagiolini M."/>
            <person name="Faulkner G."/>
            <person name="Fletcher C.F."/>
            <person name="Fukushima T."/>
            <person name="Furuno M."/>
            <person name="Futaki S."/>
            <person name="Gariboldi M."/>
            <person name="Georgii-Hemming P."/>
            <person name="Gingeras T.R."/>
            <person name="Gojobori T."/>
            <person name="Green R.E."/>
            <person name="Gustincich S."/>
            <person name="Harbers M."/>
            <person name="Hayashi Y."/>
            <person name="Hensch T.K."/>
            <person name="Hirokawa N."/>
            <person name="Hill D."/>
            <person name="Huminiecki L."/>
            <person name="Iacono M."/>
            <person name="Ikeo K."/>
            <person name="Iwama A."/>
            <person name="Ishikawa T."/>
            <person name="Jakt M."/>
            <person name="Kanapin A."/>
            <person name="Katoh M."/>
            <person name="Kawasawa Y."/>
            <person name="Kelso J."/>
            <person name="Kitamura H."/>
            <person name="Kitano H."/>
            <person name="Kollias G."/>
            <person name="Krishnan S.P."/>
            <person name="Kruger A."/>
            <person name="Kummerfeld S.K."/>
            <person name="Kurochkin I.V."/>
            <person name="Lareau L.F."/>
            <person name="Lazarevic D."/>
            <person name="Lipovich L."/>
            <person name="Liu J."/>
            <person name="Liuni S."/>
            <person name="McWilliam S."/>
            <person name="Madan Babu M."/>
            <person name="Madera M."/>
            <person name="Marchionni L."/>
            <person name="Matsuda H."/>
            <person name="Matsuzawa S."/>
            <person name="Miki H."/>
            <person name="Mignone F."/>
            <person name="Miyake S."/>
            <person name="Morris K."/>
            <person name="Mottagui-Tabar S."/>
            <person name="Mulder N."/>
            <person name="Nakano N."/>
            <person name="Nakauchi H."/>
            <person name="Ng P."/>
            <person name="Nilsson R."/>
            <person name="Nishiguchi S."/>
            <person name="Nishikawa S."/>
            <person name="Nori F."/>
            <person name="Ohara O."/>
            <person name="Okazaki Y."/>
            <person name="Orlando V."/>
            <person name="Pang K.C."/>
            <person name="Pavan W.J."/>
            <person name="Pavesi G."/>
            <person name="Pesole G."/>
            <person name="Petrovsky N."/>
            <person name="Piazza S."/>
            <person name="Reed J."/>
            <person name="Reid J.F."/>
            <person name="Ring B.Z."/>
            <person name="Ringwald M."/>
            <person name="Rost B."/>
            <person name="Ruan Y."/>
            <person name="Salzberg S.L."/>
            <person name="Sandelin A."/>
            <person name="Schneider C."/>
            <person name="Schoenbach C."/>
            <person name="Sekiguchi K."/>
            <person name="Semple C.A."/>
            <person name="Seno S."/>
            <person name="Sessa L."/>
            <person name="Sheng Y."/>
            <person name="Shibata Y."/>
            <person name="Shimada H."/>
            <person name="Shimada K."/>
            <person name="Silva D."/>
            <person name="Sinclair B."/>
            <person name="Sperling S."/>
            <person name="Stupka E."/>
            <person name="Sugiura K."/>
            <person name="Sultana R."/>
            <person name="Takenaka Y."/>
            <person name="Taki K."/>
            <person name="Tammoja K."/>
            <person name="Tan S.L."/>
            <person name="Tang S."/>
            <person name="Taylor M.S."/>
            <person name="Tegner J."/>
            <person name="Teichmann S.A."/>
            <person name="Ueda H.R."/>
            <person name="van Nimwegen E."/>
            <person name="Verardo R."/>
            <person name="Wei C.L."/>
            <person name="Yagi K."/>
            <person name="Yamanishi H."/>
            <person name="Zabarovsky E."/>
            <person name="Zhu S."/>
            <person name="Zimmer A."/>
            <person name="Hide W."/>
            <person name="Bult C."/>
            <person name="Grimmond S.M."/>
            <person name="Teasdale R.D."/>
            <person name="Liu E.T."/>
            <person name="Brusic V."/>
            <person name="Quackenbush J."/>
            <person name="Wahlestedt C."/>
            <person name="Mattick J.S."/>
            <person name="Hume D.A."/>
            <person name="Kai C."/>
            <person name="Sasaki D."/>
            <person name="Tomaru Y."/>
            <person name="Fukuda S."/>
            <person name="Kanamori-Katayama M."/>
            <person name="Suzuki M."/>
            <person name="Aoki J."/>
            <person name="Arakawa T."/>
            <person name="Iida J."/>
            <person name="Imamura K."/>
            <person name="Itoh M."/>
            <person name="Kato T."/>
            <person name="Kawaji H."/>
            <person name="Kawagashira N."/>
            <person name="Kawashima T."/>
            <person name="Kojima M."/>
            <person name="Kondo S."/>
            <person name="Konno H."/>
            <person name="Nakano K."/>
            <person name="Ninomiya N."/>
            <person name="Nishio T."/>
            <person name="Okada M."/>
            <person name="Plessy C."/>
            <person name="Shibata K."/>
            <person name="Shiraki T."/>
            <person name="Suzuki S."/>
            <person name="Tagami M."/>
            <person name="Waki K."/>
            <person name="Watahiki A."/>
            <person name="Okamura-Oho Y."/>
            <person name="Suzuki H."/>
            <person name="Kawai J."/>
            <person name="Hayashizaki Y."/>
        </authorList>
    </citation>
    <scope>NUCLEOTIDE SEQUENCE [LARGE SCALE MRNA]</scope>
    <source>
        <strain>C57BL/6J</strain>
        <tissue>Bone marrow</tissue>
        <tissue>Cecum</tissue>
        <tissue>Head</tissue>
        <tissue>Stomach</tissue>
        <tissue>Thymus</tissue>
    </source>
</reference>
<reference key="2">
    <citation type="journal article" date="2004" name="Genome Res.">
        <title>The status, quality, and expansion of the NIH full-length cDNA project: the Mammalian Gene Collection (MGC).</title>
        <authorList>
            <consortium name="The MGC Project Team"/>
        </authorList>
    </citation>
    <scope>NUCLEOTIDE SEQUENCE [LARGE SCALE MRNA]</scope>
    <source>
        <strain>C57BL/6J</strain>
        <strain>FVB/N</strain>
        <tissue>Brain</tissue>
        <tissue>Kidney</tissue>
        <tissue>Mammary gland</tissue>
    </source>
</reference>
<organism>
    <name type="scientific">Mus musculus</name>
    <name type="common">Mouse</name>
    <dbReference type="NCBI Taxonomy" id="10090"/>
    <lineage>
        <taxon>Eukaryota</taxon>
        <taxon>Metazoa</taxon>
        <taxon>Chordata</taxon>
        <taxon>Craniata</taxon>
        <taxon>Vertebrata</taxon>
        <taxon>Euteleostomi</taxon>
        <taxon>Mammalia</taxon>
        <taxon>Eutheria</taxon>
        <taxon>Euarchontoglires</taxon>
        <taxon>Glires</taxon>
        <taxon>Rodentia</taxon>
        <taxon>Myomorpha</taxon>
        <taxon>Muroidea</taxon>
        <taxon>Muridae</taxon>
        <taxon>Murinae</taxon>
        <taxon>Mus</taxon>
        <taxon>Mus</taxon>
    </lineage>
</organism>
<protein>
    <recommendedName>
        <fullName evidence="1">RNA guanine-N7 methyltransferase activating subunit</fullName>
    </recommendedName>
    <alternativeName>
        <fullName>Protein FAM103A1</fullName>
    </alternativeName>
    <alternativeName>
        <fullName evidence="1">RNA guanine-7 methyltransferase activating subunit</fullName>
    </alternativeName>
    <alternativeName>
        <fullName evidence="1">RNMT-activating mRNA cap methylating subunit</fullName>
    </alternativeName>
    <alternativeName>
        <fullName>RNMT-activating mRNA cap methyltransferase subunit</fullName>
    </alternativeName>
    <alternativeName>
        <fullName evidence="1">RNMT-activating mini protein</fullName>
        <shortName evidence="1">RAM</shortName>
    </alternativeName>
</protein>